<reference key="1">
    <citation type="journal article" date="2009" name="J. Bacteriol.">
        <title>The genome of Thermosipho africanus TCF52B: lateral genetic connections to the Firmicutes and Archaea.</title>
        <authorList>
            <person name="Nesboe C.L."/>
            <person name="Bapteste E."/>
            <person name="Curtis B."/>
            <person name="Dahle H."/>
            <person name="Lopez P."/>
            <person name="Macleod D."/>
            <person name="Dlutek M."/>
            <person name="Bowman S."/>
            <person name="Zhaxybayeva O."/>
            <person name="Birkeland N.-K."/>
            <person name="Doolittle W.F."/>
        </authorList>
    </citation>
    <scope>NUCLEOTIDE SEQUENCE [LARGE SCALE GENOMIC DNA]</scope>
    <source>
        <strain>TCF52B</strain>
    </source>
</reference>
<organism>
    <name type="scientific">Thermosipho africanus (strain TCF52B)</name>
    <dbReference type="NCBI Taxonomy" id="484019"/>
    <lineage>
        <taxon>Bacteria</taxon>
        <taxon>Thermotogati</taxon>
        <taxon>Thermotogota</taxon>
        <taxon>Thermotogae</taxon>
        <taxon>Thermotogales</taxon>
        <taxon>Fervidobacteriaceae</taxon>
        <taxon>Thermosipho</taxon>
    </lineage>
</organism>
<gene>
    <name evidence="1" type="primary">rpmE</name>
    <name type="ordered locus">THA_1552</name>
</gene>
<protein>
    <recommendedName>
        <fullName evidence="1">Large ribosomal subunit protein bL31</fullName>
    </recommendedName>
    <alternativeName>
        <fullName evidence="2">50S ribosomal protein L31</fullName>
    </alternativeName>
</protein>
<proteinExistence type="inferred from homology"/>
<sequence length="69" mass="7723">MKKGIHPEMKLITVKCACGAEHKFYSAKENVRIDVCSSCHPFYKGAGAAGMIVDTEGRIEKFKKKYNLD</sequence>
<accession>B7IDB4</accession>
<feature type="chain" id="PRO_1000126753" description="Large ribosomal subunit protein bL31">
    <location>
        <begin position="1"/>
        <end position="69"/>
    </location>
</feature>
<feature type="binding site" evidence="1">
    <location>
        <position position="16"/>
    </location>
    <ligand>
        <name>Zn(2+)</name>
        <dbReference type="ChEBI" id="CHEBI:29105"/>
    </ligand>
</feature>
<feature type="binding site" evidence="1">
    <location>
        <position position="18"/>
    </location>
    <ligand>
        <name>Zn(2+)</name>
        <dbReference type="ChEBI" id="CHEBI:29105"/>
    </ligand>
</feature>
<feature type="binding site" evidence="1">
    <location>
        <position position="36"/>
    </location>
    <ligand>
        <name>Zn(2+)</name>
        <dbReference type="ChEBI" id="CHEBI:29105"/>
    </ligand>
</feature>
<feature type="binding site" evidence="1">
    <location>
        <position position="39"/>
    </location>
    <ligand>
        <name>Zn(2+)</name>
        <dbReference type="ChEBI" id="CHEBI:29105"/>
    </ligand>
</feature>
<name>RL31_THEAB</name>
<evidence type="ECO:0000255" key="1">
    <source>
        <dbReference type="HAMAP-Rule" id="MF_00501"/>
    </source>
</evidence>
<evidence type="ECO:0000305" key="2"/>
<comment type="function">
    <text evidence="1">Binds the 23S rRNA.</text>
</comment>
<comment type="cofactor">
    <cofactor evidence="1">
        <name>Zn(2+)</name>
        <dbReference type="ChEBI" id="CHEBI:29105"/>
    </cofactor>
    <text evidence="1">Binds 1 zinc ion per subunit.</text>
</comment>
<comment type="subunit">
    <text evidence="1">Part of the 50S ribosomal subunit.</text>
</comment>
<comment type="similarity">
    <text evidence="1">Belongs to the bacterial ribosomal protein bL31 family. Type A subfamily.</text>
</comment>
<keyword id="KW-0479">Metal-binding</keyword>
<keyword id="KW-1185">Reference proteome</keyword>
<keyword id="KW-0687">Ribonucleoprotein</keyword>
<keyword id="KW-0689">Ribosomal protein</keyword>
<keyword id="KW-0694">RNA-binding</keyword>
<keyword id="KW-0699">rRNA-binding</keyword>
<keyword id="KW-0862">Zinc</keyword>
<dbReference type="EMBL" id="CP001185">
    <property type="protein sequence ID" value="ACJ75991.1"/>
    <property type="molecule type" value="Genomic_DNA"/>
</dbReference>
<dbReference type="RefSeq" id="WP_004102224.1">
    <property type="nucleotide sequence ID" value="NC_011653.1"/>
</dbReference>
<dbReference type="SMR" id="B7IDB4"/>
<dbReference type="STRING" id="484019.THA_1552"/>
<dbReference type="KEGG" id="taf:THA_1552"/>
<dbReference type="eggNOG" id="COG0254">
    <property type="taxonomic scope" value="Bacteria"/>
</dbReference>
<dbReference type="HOGENOM" id="CLU_114306_4_3_0"/>
<dbReference type="OrthoDB" id="9803251at2"/>
<dbReference type="Proteomes" id="UP000002453">
    <property type="component" value="Chromosome"/>
</dbReference>
<dbReference type="GO" id="GO:1990904">
    <property type="term" value="C:ribonucleoprotein complex"/>
    <property type="evidence" value="ECO:0007669"/>
    <property type="project" value="UniProtKB-KW"/>
</dbReference>
<dbReference type="GO" id="GO:0005840">
    <property type="term" value="C:ribosome"/>
    <property type="evidence" value="ECO:0007669"/>
    <property type="project" value="UniProtKB-KW"/>
</dbReference>
<dbReference type="GO" id="GO:0046872">
    <property type="term" value="F:metal ion binding"/>
    <property type="evidence" value="ECO:0007669"/>
    <property type="project" value="UniProtKB-KW"/>
</dbReference>
<dbReference type="GO" id="GO:0019843">
    <property type="term" value="F:rRNA binding"/>
    <property type="evidence" value="ECO:0007669"/>
    <property type="project" value="UniProtKB-KW"/>
</dbReference>
<dbReference type="GO" id="GO:0003735">
    <property type="term" value="F:structural constituent of ribosome"/>
    <property type="evidence" value="ECO:0007669"/>
    <property type="project" value="InterPro"/>
</dbReference>
<dbReference type="GO" id="GO:0006412">
    <property type="term" value="P:translation"/>
    <property type="evidence" value="ECO:0007669"/>
    <property type="project" value="UniProtKB-UniRule"/>
</dbReference>
<dbReference type="Gene3D" id="4.10.830.30">
    <property type="entry name" value="Ribosomal protein L31"/>
    <property type="match status" value="1"/>
</dbReference>
<dbReference type="HAMAP" id="MF_00501">
    <property type="entry name" value="Ribosomal_bL31_1"/>
    <property type="match status" value="1"/>
</dbReference>
<dbReference type="InterPro" id="IPR034704">
    <property type="entry name" value="Ribosomal_bL28/bL31-like_sf"/>
</dbReference>
<dbReference type="InterPro" id="IPR002150">
    <property type="entry name" value="Ribosomal_bL31"/>
</dbReference>
<dbReference type="InterPro" id="IPR027491">
    <property type="entry name" value="Ribosomal_bL31_A"/>
</dbReference>
<dbReference type="InterPro" id="IPR042105">
    <property type="entry name" value="Ribosomal_bL31_sf"/>
</dbReference>
<dbReference type="NCBIfam" id="TIGR00105">
    <property type="entry name" value="L31"/>
    <property type="match status" value="1"/>
</dbReference>
<dbReference type="NCBIfam" id="NF000612">
    <property type="entry name" value="PRK00019.1"/>
    <property type="match status" value="1"/>
</dbReference>
<dbReference type="PANTHER" id="PTHR33280">
    <property type="entry name" value="50S RIBOSOMAL PROTEIN L31, CHLOROPLASTIC"/>
    <property type="match status" value="1"/>
</dbReference>
<dbReference type="PANTHER" id="PTHR33280:SF1">
    <property type="entry name" value="LARGE RIBOSOMAL SUBUNIT PROTEIN BL31C"/>
    <property type="match status" value="1"/>
</dbReference>
<dbReference type="Pfam" id="PF01197">
    <property type="entry name" value="Ribosomal_L31"/>
    <property type="match status" value="1"/>
</dbReference>
<dbReference type="PRINTS" id="PR01249">
    <property type="entry name" value="RIBOSOMALL31"/>
</dbReference>
<dbReference type="SUPFAM" id="SSF143800">
    <property type="entry name" value="L28p-like"/>
    <property type="match status" value="1"/>
</dbReference>